<dbReference type="EMBL" id="CP000410">
    <property type="protein sequence ID" value="ABJ54303.1"/>
    <property type="molecule type" value="Genomic_DNA"/>
</dbReference>
<dbReference type="RefSeq" id="WP_000966743.1">
    <property type="nucleotide sequence ID" value="NZ_JAMLJR010000013.1"/>
</dbReference>
<dbReference type="SMR" id="Q04J97"/>
<dbReference type="PaxDb" id="373153-SPD_1485"/>
<dbReference type="GeneID" id="45653117"/>
<dbReference type="KEGG" id="spd:SPD_1485"/>
<dbReference type="eggNOG" id="COG0353">
    <property type="taxonomic scope" value="Bacteria"/>
</dbReference>
<dbReference type="HOGENOM" id="CLU_060739_1_0_9"/>
<dbReference type="BioCyc" id="SPNE373153:G1G6V-1601-MONOMER"/>
<dbReference type="Proteomes" id="UP000001452">
    <property type="component" value="Chromosome"/>
</dbReference>
<dbReference type="GO" id="GO:0003677">
    <property type="term" value="F:DNA binding"/>
    <property type="evidence" value="ECO:0007669"/>
    <property type="project" value="UniProtKB-UniRule"/>
</dbReference>
<dbReference type="GO" id="GO:0008270">
    <property type="term" value="F:zinc ion binding"/>
    <property type="evidence" value="ECO:0007669"/>
    <property type="project" value="UniProtKB-KW"/>
</dbReference>
<dbReference type="GO" id="GO:0006310">
    <property type="term" value="P:DNA recombination"/>
    <property type="evidence" value="ECO:0007669"/>
    <property type="project" value="UniProtKB-UniRule"/>
</dbReference>
<dbReference type="GO" id="GO:0006281">
    <property type="term" value="P:DNA repair"/>
    <property type="evidence" value="ECO:0007669"/>
    <property type="project" value="UniProtKB-UniRule"/>
</dbReference>
<dbReference type="CDD" id="cd01025">
    <property type="entry name" value="TOPRIM_recR"/>
    <property type="match status" value="1"/>
</dbReference>
<dbReference type="Gene3D" id="3.30.60.80">
    <property type="match status" value="1"/>
</dbReference>
<dbReference type="Gene3D" id="3.40.1360.10">
    <property type="match status" value="1"/>
</dbReference>
<dbReference type="Gene3D" id="6.10.250.240">
    <property type="match status" value="1"/>
</dbReference>
<dbReference type="Gene3D" id="1.10.8.420">
    <property type="entry name" value="RecR Domain 1"/>
    <property type="match status" value="1"/>
</dbReference>
<dbReference type="HAMAP" id="MF_00017">
    <property type="entry name" value="RecR"/>
    <property type="match status" value="1"/>
</dbReference>
<dbReference type="InterPro" id="IPR000093">
    <property type="entry name" value="DNA_Rcmb_RecR"/>
</dbReference>
<dbReference type="InterPro" id="IPR023627">
    <property type="entry name" value="Rcmb_RecR"/>
</dbReference>
<dbReference type="InterPro" id="IPR015967">
    <property type="entry name" value="Rcmb_RecR_Znf"/>
</dbReference>
<dbReference type="InterPro" id="IPR006171">
    <property type="entry name" value="TOPRIM_dom"/>
</dbReference>
<dbReference type="InterPro" id="IPR034137">
    <property type="entry name" value="TOPRIM_RecR"/>
</dbReference>
<dbReference type="NCBIfam" id="TIGR00615">
    <property type="entry name" value="recR"/>
    <property type="match status" value="1"/>
</dbReference>
<dbReference type="PANTHER" id="PTHR30446">
    <property type="entry name" value="RECOMBINATION PROTEIN RECR"/>
    <property type="match status" value="1"/>
</dbReference>
<dbReference type="PANTHER" id="PTHR30446:SF0">
    <property type="entry name" value="RECOMBINATION PROTEIN RECR"/>
    <property type="match status" value="1"/>
</dbReference>
<dbReference type="Pfam" id="PF21175">
    <property type="entry name" value="RecR_C"/>
    <property type="match status" value="1"/>
</dbReference>
<dbReference type="Pfam" id="PF21176">
    <property type="entry name" value="RecR_HhH"/>
    <property type="match status" value="1"/>
</dbReference>
<dbReference type="Pfam" id="PF02132">
    <property type="entry name" value="RecR_ZnF"/>
    <property type="match status" value="1"/>
</dbReference>
<dbReference type="Pfam" id="PF13662">
    <property type="entry name" value="Toprim_4"/>
    <property type="match status" value="1"/>
</dbReference>
<dbReference type="SMART" id="SM00493">
    <property type="entry name" value="TOPRIM"/>
    <property type="match status" value="1"/>
</dbReference>
<dbReference type="SUPFAM" id="SSF111304">
    <property type="entry name" value="Recombination protein RecR"/>
    <property type="match status" value="1"/>
</dbReference>
<dbReference type="PROSITE" id="PS01300">
    <property type="entry name" value="RECR"/>
    <property type="match status" value="1"/>
</dbReference>
<dbReference type="PROSITE" id="PS50880">
    <property type="entry name" value="TOPRIM"/>
    <property type="match status" value="1"/>
</dbReference>
<accession>Q04J97</accession>
<gene>
    <name evidence="1" type="primary">recR</name>
    <name type="ordered locus">SPD_1485</name>
</gene>
<comment type="function">
    <text evidence="1">May play a role in DNA repair. It seems to be involved in an RecBC-independent recombinational process of DNA repair. It may act with RecF and RecO.</text>
</comment>
<comment type="similarity">
    <text evidence="1">Belongs to the RecR family.</text>
</comment>
<name>RECR_STRP2</name>
<protein>
    <recommendedName>
        <fullName evidence="1">Recombination protein RecR</fullName>
    </recommendedName>
</protein>
<proteinExistence type="inferred from homology"/>
<organism>
    <name type="scientific">Streptococcus pneumoniae serotype 2 (strain D39 / NCTC 7466)</name>
    <dbReference type="NCBI Taxonomy" id="373153"/>
    <lineage>
        <taxon>Bacteria</taxon>
        <taxon>Bacillati</taxon>
        <taxon>Bacillota</taxon>
        <taxon>Bacilli</taxon>
        <taxon>Lactobacillales</taxon>
        <taxon>Streptococcaceae</taxon>
        <taxon>Streptococcus</taxon>
    </lineage>
</organism>
<evidence type="ECO:0000255" key="1">
    <source>
        <dbReference type="HAMAP-Rule" id="MF_00017"/>
    </source>
</evidence>
<sequence length="198" mass="21689">MLYPTPIAKLIDSYSKLPGIGIKTATRLAFYTIGMSADDVNEFAKNLLSAKRELTYCSICGRLTDDDPCSICTDPTRDQTTILVLEDSRDVAAMENIQEYHGLYHVLHGLISPMNGISPDDINLKSLMTRLMDSEVSEVIVATNATADGEATSMYLSRLLKPAGIKVTRLARGLAVGADIEYADEVTLLRAIENRTEL</sequence>
<reference key="1">
    <citation type="journal article" date="2007" name="J. Bacteriol.">
        <title>Genome sequence of Avery's virulent serotype 2 strain D39 of Streptococcus pneumoniae and comparison with that of unencapsulated laboratory strain R6.</title>
        <authorList>
            <person name="Lanie J.A."/>
            <person name="Ng W.-L."/>
            <person name="Kazmierczak K.M."/>
            <person name="Andrzejewski T.M."/>
            <person name="Davidsen T.M."/>
            <person name="Wayne K.J."/>
            <person name="Tettelin H."/>
            <person name="Glass J.I."/>
            <person name="Winkler M.E."/>
        </authorList>
    </citation>
    <scope>NUCLEOTIDE SEQUENCE [LARGE SCALE GENOMIC DNA]</scope>
    <source>
        <strain>D39 / NCTC 7466</strain>
    </source>
</reference>
<feature type="chain" id="PRO_1000001625" description="Recombination protein RecR">
    <location>
        <begin position="1"/>
        <end position="198"/>
    </location>
</feature>
<feature type="domain" description="Toprim" evidence="1">
    <location>
        <begin position="80"/>
        <end position="175"/>
    </location>
</feature>
<feature type="zinc finger region" description="C4-type" evidence="1">
    <location>
        <begin position="57"/>
        <end position="72"/>
    </location>
</feature>
<keyword id="KW-0227">DNA damage</keyword>
<keyword id="KW-0233">DNA recombination</keyword>
<keyword id="KW-0234">DNA repair</keyword>
<keyword id="KW-0479">Metal-binding</keyword>
<keyword id="KW-1185">Reference proteome</keyword>
<keyword id="KW-0862">Zinc</keyword>
<keyword id="KW-0863">Zinc-finger</keyword>